<evidence type="ECO:0000250" key="1"/>
<evidence type="ECO:0000255" key="2"/>
<evidence type="ECO:0000269" key="3">
    <source>
    </source>
</evidence>
<evidence type="ECO:0000269" key="4">
    <source>
    </source>
</evidence>
<evidence type="ECO:0000269" key="5">
    <source>
    </source>
</evidence>
<evidence type="ECO:0000305" key="6"/>
<protein>
    <recommendedName>
        <fullName>Limonene/alpha-pinene synthase, chloroplastic</fullName>
    </recommendedName>
    <alternativeName>
        <fullName>(-)-(1S,5S)-alpha-pinene synthase</fullName>
        <ecNumber>4.2.3.119</ecNumber>
    </alternativeName>
    <alternativeName>
        <fullName>(-)-(4S)-limonene synthase</fullName>
        <ecNumber>4.2.3.16</ecNumber>
    </alternativeName>
    <alternativeName>
        <fullName>Agg-pin2</fullName>
    </alternativeName>
</protein>
<gene>
    <name type="primary">ag11</name>
    <name type="synonym">agc11</name>
</gene>
<accession>Q9M7C9</accession>
<keyword id="KW-0150">Chloroplast</keyword>
<keyword id="KW-0456">Lyase</keyword>
<keyword id="KW-0460">Magnesium</keyword>
<keyword id="KW-0464">Manganese</keyword>
<keyword id="KW-0479">Metal-binding</keyword>
<keyword id="KW-0511">Multifunctional enzyme</keyword>
<keyword id="KW-0934">Plastid</keyword>
<keyword id="KW-0809">Transit peptide</keyword>
<feature type="transit peptide" description="Chloroplast" evidence="2">
    <location>
        <begin position="1"/>
        <end position="56"/>
    </location>
</feature>
<feature type="chain" id="PRO_0000033633" description="Limonene/alpha-pinene synthase, chloroplastic">
    <location>
        <begin position="57"/>
        <end position="637"/>
    </location>
</feature>
<feature type="short sequence motif" description="DDXXD motif">
    <location>
        <begin position="388"/>
        <end position="392"/>
    </location>
</feature>
<feature type="binding site" evidence="1">
    <location>
        <position position="388"/>
    </location>
    <ligand>
        <name>Mg(2+)</name>
        <dbReference type="ChEBI" id="CHEBI:18420"/>
        <label>1</label>
    </ligand>
</feature>
<feature type="binding site" evidence="1">
    <location>
        <position position="388"/>
    </location>
    <ligand>
        <name>Mg(2+)</name>
        <dbReference type="ChEBI" id="CHEBI:18420"/>
        <label>2</label>
    </ligand>
</feature>
<feature type="binding site" evidence="1">
    <location>
        <position position="392"/>
    </location>
    <ligand>
        <name>Mg(2+)</name>
        <dbReference type="ChEBI" id="CHEBI:18420"/>
        <label>1</label>
    </ligand>
</feature>
<feature type="binding site" evidence="1">
    <location>
        <position position="392"/>
    </location>
    <ligand>
        <name>Mg(2+)</name>
        <dbReference type="ChEBI" id="CHEBI:18420"/>
        <label>2</label>
    </ligand>
</feature>
<feature type="binding site" evidence="1">
    <location>
        <position position="540"/>
    </location>
    <ligand>
        <name>Mg(2+)</name>
        <dbReference type="ChEBI" id="CHEBI:18420"/>
        <label>3</label>
    </ligand>
</feature>
<dbReference type="EC" id="4.2.3.119"/>
<dbReference type="EC" id="4.2.3.16"/>
<dbReference type="EMBL" id="AF139207">
    <property type="protein sequence ID" value="AAF61455.1"/>
    <property type="molecule type" value="mRNA"/>
</dbReference>
<dbReference type="SMR" id="Q9M7C9"/>
<dbReference type="KEGG" id="ag:AAF61455"/>
<dbReference type="BioCyc" id="MetaCyc:AG11-MONOMER"/>
<dbReference type="BRENDA" id="4.2.3.119">
    <property type="organism ID" value="2"/>
</dbReference>
<dbReference type="UniPathway" id="UPA00924"/>
<dbReference type="GO" id="GO:0009507">
    <property type="term" value="C:chloroplast"/>
    <property type="evidence" value="ECO:0007669"/>
    <property type="project" value="UniProtKB-SubCell"/>
</dbReference>
<dbReference type="GO" id="GO:0050552">
    <property type="term" value="F:(4S)-limonene synthase activity"/>
    <property type="evidence" value="ECO:0007669"/>
    <property type="project" value="UniProtKB-EC"/>
</dbReference>
<dbReference type="GO" id="GO:0000287">
    <property type="term" value="F:magnesium ion binding"/>
    <property type="evidence" value="ECO:0007669"/>
    <property type="project" value="InterPro"/>
</dbReference>
<dbReference type="GO" id="GO:0050550">
    <property type="term" value="F:pinene synthase activity"/>
    <property type="evidence" value="ECO:0007669"/>
    <property type="project" value="UniProtKB-EC"/>
</dbReference>
<dbReference type="GO" id="GO:0016102">
    <property type="term" value="P:diterpenoid biosynthetic process"/>
    <property type="evidence" value="ECO:0007669"/>
    <property type="project" value="InterPro"/>
</dbReference>
<dbReference type="CDD" id="cd00684">
    <property type="entry name" value="Terpene_cyclase_plant_C1"/>
    <property type="match status" value="1"/>
</dbReference>
<dbReference type="FunFam" id="1.50.10.130:FF:000002">
    <property type="entry name" value="Ent-copalyl diphosphate synthase, chloroplastic"/>
    <property type="match status" value="1"/>
</dbReference>
<dbReference type="FunFam" id="1.10.600.10:FF:000005">
    <property type="entry name" value="Ent-kaur-16-ene synthase, chloroplastic"/>
    <property type="match status" value="1"/>
</dbReference>
<dbReference type="Gene3D" id="1.10.600.10">
    <property type="entry name" value="Farnesyl Diphosphate Synthase"/>
    <property type="match status" value="1"/>
</dbReference>
<dbReference type="Gene3D" id="1.50.10.130">
    <property type="entry name" value="Terpene synthase, N-terminal domain"/>
    <property type="match status" value="1"/>
</dbReference>
<dbReference type="InterPro" id="IPR008949">
    <property type="entry name" value="Isoprenoid_synthase_dom_sf"/>
</dbReference>
<dbReference type="InterPro" id="IPR034741">
    <property type="entry name" value="Terpene_cyclase-like_1_C"/>
</dbReference>
<dbReference type="InterPro" id="IPR044814">
    <property type="entry name" value="Terpene_cyclase_plant_C1"/>
</dbReference>
<dbReference type="InterPro" id="IPR001906">
    <property type="entry name" value="Terpene_synth_N"/>
</dbReference>
<dbReference type="InterPro" id="IPR036965">
    <property type="entry name" value="Terpene_synth_N_sf"/>
</dbReference>
<dbReference type="InterPro" id="IPR050148">
    <property type="entry name" value="Terpene_synthase-like"/>
</dbReference>
<dbReference type="InterPro" id="IPR005630">
    <property type="entry name" value="Terpene_synthase_metal-bd"/>
</dbReference>
<dbReference type="InterPro" id="IPR008930">
    <property type="entry name" value="Terpenoid_cyclase/PrenylTrfase"/>
</dbReference>
<dbReference type="PANTHER" id="PTHR31739:SF25">
    <property type="entry name" value="(E,E)-GERANYLLINALOOL SYNTHASE"/>
    <property type="match status" value="1"/>
</dbReference>
<dbReference type="PANTHER" id="PTHR31739">
    <property type="entry name" value="ENT-COPALYL DIPHOSPHATE SYNTHASE, CHLOROPLASTIC"/>
    <property type="match status" value="1"/>
</dbReference>
<dbReference type="Pfam" id="PF01397">
    <property type="entry name" value="Terpene_synth"/>
    <property type="match status" value="1"/>
</dbReference>
<dbReference type="Pfam" id="PF03936">
    <property type="entry name" value="Terpene_synth_C"/>
    <property type="match status" value="1"/>
</dbReference>
<dbReference type="SFLD" id="SFLDS00005">
    <property type="entry name" value="Isoprenoid_Synthase_Type_I"/>
    <property type="match status" value="1"/>
</dbReference>
<dbReference type="SFLD" id="SFLDG01019">
    <property type="entry name" value="Terpene_Cyclase_Like_1_C_Termi"/>
    <property type="match status" value="1"/>
</dbReference>
<dbReference type="SFLD" id="SFLDG01014">
    <property type="entry name" value="Terpene_Cyclase_Like_1_N-term"/>
    <property type="match status" value="1"/>
</dbReference>
<dbReference type="SUPFAM" id="SSF48239">
    <property type="entry name" value="Terpenoid cyclases/Protein prenyltransferases"/>
    <property type="match status" value="1"/>
</dbReference>
<dbReference type="SUPFAM" id="SSF48576">
    <property type="entry name" value="Terpenoid synthases"/>
    <property type="match status" value="1"/>
</dbReference>
<comment type="function">
    <text evidence="3 4 5">Involved in defensive oleoresin formation in conifers in response to insect attack or other injury. Involved in monoterpene (C10) olefins biosynthesis.</text>
</comment>
<comment type="catalytic activity">
    <reaction evidence="3">
        <text>(2E)-geranyl diphosphate = (4S)-limonene + diphosphate</text>
        <dbReference type="Rhea" id="RHEA:12869"/>
        <dbReference type="ChEBI" id="CHEBI:15383"/>
        <dbReference type="ChEBI" id="CHEBI:33019"/>
        <dbReference type="ChEBI" id="CHEBI:58057"/>
        <dbReference type="EC" id="4.2.3.16"/>
    </reaction>
</comment>
<comment type="catalytic activity">
    <reaction evidence="3">
        <text>(2E)-geranyl diphosphate = (1S,5S)-alpha-pinene + diphosphate</text>
        <dbReference type="Rhea" id="RHEA:25488"/>
        <dbReference type="ChEBI" id="CHEBI:28660"/>
        <dbReference type="ChEBI" id="CHEBI:33019"/>
        <dbReference type="ChEBI" id="CHEBI:58057"/>
        <dbReference type="EC" id="4.2.3.119"/>
    </reaction>
</comment>
<comment type="cofactor">
    <cofactor evidence="1">
        <name>Mg(2+)</name>
        <dbReference type="ChEBI" id="CHEBI:18420"/>
    </cofactor>
    <cofactor evidence="1">
        <name>Mn(2+)</name>
        <dbReference type="ChEBI" id="CHEBI:29035"/>
    </cofactor>
    <text evidence="1">Binds 3 Mg(2+) or Mn(2+) ions per subunit.</text>
</comment>
<comment type="cofactor">
    <cofactor evidence="1">
        <name>K(+)</name>
        <dbReference type="ChEBI" id="CHEBI:29103"/>
    </cofactor>
</comment>
<comment type="pathway">
    <text>Terpene metabolism; oleoresin biosynthesis.</text>
</comment>
<comment type="subcellular location">
    <subcellularLocation>
        <location evidence="1">Plastid</location>
        <location evidence="1">Chloroplast</location>
    </subcellularLocation>
</comment>
<comment type="domain">
    <text>The C-terminal part of the protein seems to be involved in the cyclization step(s) required for the synthesis of pinene.</text>
</comment>
<comment type="domain">
    <text>The Asp-Asp-Xaa-Xaa-Asp/Glu (DDXXD/E) motif is important for the catalytic activity, presumably through binding to Mg(2+).</text>
</comment>
<comment type="miscellaneous">
    <text>The conserved 70-Arg-Arg-71 motif may play a role in the isomerization step of the terpenoid cyclization reaction sequence.</text>
</comment>
<comment type="similarity">
    <text evidence="6">Belongs to the terpene synthase family. Tpsd subfamily.</text>
</comment>
<sequence length="637" mass="73273">MALLSIVSLQVPKSCGLKSLISSSNVQKALCISTAVPTLRMRRRQKALVINMKLTTVSHRDDNGGGVLQRRIADHHPNLWEDDFIQSLSSPYGGSSYSERAVTVVEEVKEMFNSIPNNRELFGSQNDLLTRLWMVDSIERLGIDRHFQNEIRVALDYVYSYWKEKEGIGCGRDSTFPDLNSTALALRTLRLHGYNVSSDVLEYFKDQKGHFACPAILTEGQITRSVLNLYRASLVAFPGEKVMEEAEIFSASYLKEVLQKIPVSSFSREIEYVLEYGWHTNLPRLEARNYIDVYGQDSYESSNEMPYVNTQKLLKLAKLEFNIFHSLQQKELQYISRWWKDSCSSHLTFTRHRHVEYYTMASCISMEPKHSAFRLGFVKTCHLLTVLDDMYDTFGTLDELQLFTTAFKRWDLSETKCLPEYMKAVYMDLYQCLNELAQEAEKTQGRDTLNYIRNAYESHFDSFMHEAKWISSGYLPTFEEYLKNGKVSSGSRTATLQPILTLDVPLPNYILQEIDYPSRFNDLASSLLRLRGDTRCYKADRARGEEASAISCYMKDHPGSTEEDALNHINVMISDAIRELNWELLRPDSKSPISSKKHAFDITRAFHHLYKYRDGYTVASSETKNLVMKTVLEPVAL</sequence>
<reference key="1">
    <citation type="journal article" date="1999" name="Arch. Biochem. Biophys.">
        <title>cDNA cloning, characterization, and functional expression of four new monoterpene synthase members of the Tpsd gene family from grand fir (Abies grandis).</title>
        <authorList>
            <person name="Bohlmann J."/>
            <person name="Phillips M."/>
            <person name="Ramachandiran V."/>
            <person name="Katoh S."/>
            <person name="Croteau R.B."/>
        </authorList>
    </citation>
    <scope>NUCLEOTIDE SEQUENCE [MRNA]</scope>
    <scope>FUNCTION</scope>
    <scope>CATALYTIC ACTIVITY</scope>
    <source>
        <tissue>Stem</tissue>
    </source>
</reference>
<reference key="2">
    <citation type="journal article" date="1998" name="Proc. Natl. Acad. Sci. U.S.A.">
        <title>Plant terpenoid synthases: molecular biology and phylogenetic analysis.</title>
        <authorList>
            <person name="Bohlmann J."/>
            <person name="Meyer-Gauen G."/>
            <person name="Croteau R.B."/>
        </authorList>
    </citation>
    <scope>GENE FAMILY</scope>
    <scope>NOMENCLATURE</scope>
    <scope>FUNCTION</scope>
</reference>
<reference key="3">
    <citation type="journal article" date="2001" name="Genetics">
        <title>Genomic organization of plant terpene synthases and molecular evolutionary implications.</title>
        <authorList>
            <person name="Trapp S.C."/>
            <person name="Croteau R.B."/>
        </authorList>
    </citation>
    <scope>GENE FAMILY</scope>
    <scope>NOMENCLATURE</scope>
    <scope>FUNCTION</scope>
</reference>
<name>TPSDB_ABIGR</name>
<proteinExistence type="evidence at protein level"/>
<organism>
    <name type="scientific">Abies grandis</name>
    <name type="common">Grand fir</name>
    <name type="synonym">Pinus grandis</name>
    <dbReference type="NCBI Taxonomy" id="46611"/>
    <lineage>
        <taxon>Eukaryota</taxon>
        <taxon>Viridiplantae</taxon>
        <taxon>Streptophyta</taxon>
        <taxon>Embryophyta</taxon>
        <taxon>Tracheophyta</taxon>
        <taxon>Spermatophyta</taxon>
        <taxon>Pinopsida</taxon>
        <taxon>Pinidae</taxon>
        <taxon>Conifers I</taxon>
        <taxon>Pinales</taxon>
        <taxon>Pinaceae</taxon>
        <taxon>Abies</taxon>
    </lineage>
</organism>